<proteinExistence type="inferred from homology"/>
<name>LYST1_DICDI</name>
<organism>
    <name type="scientific">Dictyostelium discoideum</name>
    <name type="common">Social amoeba</name>
    <dbReference type="NCBI Taxonomy" id="44689"/>
    <lineage>
        <taxon>Eukaryota</taxon>
        <taxon>Amoebozoa</taxon>
        <taxon>Evosea</taxon>
        <taxon>Eumycetozoa</taxon>
        <taxon>Dictyostelia</taxon>
        <taxon>Dictyosteliales</taxon>
        <taxon>Dictyosteliaceae</taxon>
        <taxon>Dictyostelium</taxon>
    </lineage>
</organism>
<protein>
    <recommendedName>
        <fullName>Probable T4-type lysozyme 1</fullName>
        <ecNumber>3.2.1.17</ecNumber>
    </recommendedName>
    <alternativeName>
        <fullName>Muramidase</fullName>
    </alternativeName>
</protein>
<evidence type="ECO:0000250" key="1"/>
<evidence type="ECO:0000305" key="2"/>
<sequence>MVSSIKDMLKYDEGEKLEMYKDTEGYYTIGIGHLITRIKERNAAILSLEEKIGHKVKMDSKNEPIITSSESEALFEKDLSVATKSIESNPTLSTIYKNLDNIRKMAIINMVFQMGVNNVLTFKMSLKLIEEKKWAEAAKEMKNSTWNHQTPNRSNRVISVIETGTLNAYK</sequence>
<reference key="1">
    <citation type="journal article" date="2002" name="Nature">
        <title>Sequence and analysis of chromosome 2 of Dictyostelium discoideum.</title>
        <authorList>
            <person name="Gloeckner G."/>
            <person name="Eichinger L."/>
            <person name="Szafranski K."/>
            <person name="Pachebat J.A."/>
            <person name="Bankier A.T."/>
            <person name="Dear P.H."/>
            <person name="Lehmann R."/>
            <person name="Baumgart C."/>
            <person name="Parra G."/>
            <person name="Abril J.F."/>
            <person name="Guigo R."/>
            <person name="Kumpf K."/>
            <person name="Tunggal B."/>
            <person name="Cox E.C."/>
            <person name="Quail M.A."/>
            <person name="Platzer M."/>
            <person name="Rosenthal A."/>
            <person name="Noegel A.A."/>
        </authorList>
    </citation>
    <scope>NUCLEOTIDE SEQUENCE [LARGE SCALE GENOMIC DNA]</scope>
    <source>
        <strain>AX4</strain>
    </source>
</reference>
<reference key="2">
    <citation type="journal article" date="2005" name="Nature">
        <title>The genome of the social amoeba Dictyostelium discoideum.</title>
        <authorList>
            <person name="Eichinger L."/>
            <person name="Pachebat J.A."/>
            <person name="Gloeckner G."/>
            <person name="Rajandream M.A."/>
            <person name="Sucgang R."/>
            <person name="Berriman M."/>
            <person name="Song J."/>
            <person name="Olsen R."/>
            <person name="Szafranski K."/>
            <person name="Xu Q."/>
            <person name="Tunggal B."/>
            <person name="Kummerfeld S."/>
            <person name="Madera M."/>
            <person name="Konfortov B.A."/>
            <person name="Rivero F."/>
            <person name="Bankier A.T."/>
            <person name="Lehmann R."/>
            <person name="Hamlin N."/>
            <person name="Davies R."/>
            <person name="Gaudet P."/>
            <person name="Fey P."/>
            <person name="Pilcher K."/>
            <person name="Chen G."/>
            <person name="Saunders D."/>
            <person name="Sodergren E.J."/>
            <person name="Davis P."/>
            <person name="Kerhornou A."/>
            <person name="Nie X."/>
            <person name="Hall N."/>
            <person name="Anjard C."/>
            <person name="Hemphill L."/>
            <person name="Bason N."/>
            <person name="Farbrother P."/>
            <person name="Desany B."/>
            <person name="Just E."/>
            <person name="Morio T."/>
            <person name="Rost R."/>
            <person name="Churcher C.M."/>
            <person name="Cooper J."/>
            <person name="Haydock S."/>
            <person name="van Driessche N."/>
            <person name="Cronin A."/>
            <person name="Goodhead I."/>
            <person name="Muzny D.M."/>
            <person name="Mourier T."/>
            <person name="Pain A."/>
            <person name="Lu M."/>
            <person name="Harper D."/>
            <person name="Lindsay R."/>
            <person name="Hauser H."/>
            <person name="James K.D."/>
            <person name="Quiles M."/>
            <person name="Madan Babu M."/>
            <person name="Saito T."/>
            <person name="Buchrieser C."/>
            <person name="Wardroper A."/>
            <person name="Felder M."/>
            <person name="Thangavelu M."/>
            <person name="Johnson D."/>
            <person name="Knights A."/>
            <person name="Loulseged H."/>
            <person name="Mungall K.L."/>
            <person name="Oliver K."/>
            <person name="Price C."/>
            <person name="Quail M.A."/>
            <person name="Urushihara H."/>
            <person name="Hernandez J."/>
            <person name="Rabbinowitsch E."/>
            <person name="Steffen D."/>
            <person name="Sanders M."/>
            <person name="Ma J."/>
            <person name="Kohara Y."/>
            <person name="Sharp S."/>
            <person name="Simmonds M.N."/>
            <person name="Spiegler S."/>
            <person name="Tivey A."/>
            <person name="Sugano S."/>
            <person name="White B."/>
            <person name="Walker D."/>
            <person name="Woodward J.R."/>
            <person name="Winckler T."/>
            <person name="Tanaka Y."/>
            <person name="Shaulsky G."/>
            <person name="Schleicher M."/>
            <person name="Weinstock G.M."/>
            <person name="Rosenthal A."/>
            <person name="Cox E.C."/>
            <person name="Chisholm R.L."/>
            <person name="Gibbs R.A."/>
            <person name="Loomis W.F."/>
            <person name="Platzer M."/>
            <person name="Kay R.R."/>
            <person name="Williams J.G."/>
            <person name="Dear P.H."/>
            <person name="Noegel A.A."/>
            <person name="Barrell B.G."/>
            <person name="Kuspa A."/>
        </authorList>
    </citation>
    <scope>NUCLEOTIDE SEQUENCE [LARGE SCALE GENOMIC DNA]</scope>
    <source>
        <strain>AX4</strain>
    </source>
</reference>
<gene>
    <name type="ORF">DDB_G0274831</name>
</gene>
<dbReference type="EC" id="3.2.1.17"/>
<dbReference type="EMBL" id="AAFI02000012">
    <property type="protein sequence ID" value="EAL70308.1"/>
    <property type="molecule type" value="Genomic_DNA"/>
</dbReference>
<dbReference type="RefSeq" id="XP_643993.1">
    <property type="nucleotide sequence ID" value="XM_638901.1"/>
</dbReference>
<dbReference type="SMR" id="Q556F2"/>
<dbReference type="CAZy" id="GH24">
    <property type="family name" value="Glycoside Hydrolase Family 24"/>
</dbReference>
<dbReference type="PaxDb" id="44689-DDB0266462"/>
<dbReference type="EnsemblProtists" id="EAL70308">
    <property type="protein sequence ID" value="EAL70308"/>
    <property type="gene ID" value="DDB_G0274831"/>
</dbReference>
<dbReference type="GeneID" id="8619419"/>
<dbReference type="KEGG" id="ddi:DDB_G0274831"/>
<dbReference type="dictyBase" id="DDB_G0274831">
    <property type="gene designation" value="lyT1-4"/>
</dbReference>
<dbReference type="VEuPathDB" id="AmoebaDB:DDB_G0274831"/>
<dbReference type="HOGENOM" id="CLU_115295_0_0_1"/>
<dbReference type="InParanoid" id="Q556F2"/>
<dbReference type="PRO" id="PR:Q556F2"/>
<dbReference type="Proteomes" id="UP000002195">
    <property type="component" value="Chromosome 2"/>
</dbReference>
<dbReference type="GO" id="GO:0003796">
    <property type="term" value="F:lysozyme activity"/>
    <property type="evidence" value="ECO:0007669"/>
    <property type="project" value="UniProtKB-EC"/>
</dbReference>
<dbReference type="GO" id="GO:0016998">
    <property type="term" value="P:cell wall macromolecule catabolic process"/>
    <property type="evidence" value="ECO:0007669"/>
    <property type="project" value="InterPro"/>
</dbReference>
<dbReference type="GO" id="GO:0042742">
    <property type="term" value="P:defense response to bacterium"/>
    <property type="evidence" value="ECO:0007669"/>
    <property type="project" value="UniProtKB-KW"/>
</dbReference>
<dbReference type="GO" id="GO:0031640">
    <property type="term" value="P:killing of cells of another organism"/>
    <property type="evidence" value="ECO:0007669"/>
    <property type="project" value="UniProtKB-KW"/>
</dbReference>
<dbReference type="GO" id="GO:0009253">
    <property type="term" value="P:peptidoglycan catabolic process"/>
    <property type="evidence" value="ECO:0007669"/>
    <property type="project" value="InterPro"/>
</dbReference>
<dbReference type="CDD" id="cd00735">
    <property type="entry name" value="T4-like_lys"/>
    <property type="match status" value="1"/>
</dbReference>
<dbReference type="Gene3D" id="1.10.530.40">
    <property type="match status" value="1"/>
</dbReference>
<dbReference type="InterPro" id="IPR002196">
    <property type="entry name" value="Glyco_hydro_24"/>
</dbReference>
<dbReference type="InterPro" id="IPR023346">
    <property type="entry name" value="Lysozyme-like_dom_sf"/>
</dbReference>
<dbReference type="InterPro" id="IPR023347">
    <property type="entry name" value="Lysozyme_dom_sf"/>
</dbReference>
<dbReference type="InterPro" id="IPR052619">
    <property type="entry name" value="Phage_lysozyme-like"/>
</dbReference>
<dbReference type="InterPro" id="IPR001165">
    <property type="entry name" value="T4-type_lysozyme"/>
</dbReference>
<dbReference type="PANTHER" id="PTHR37406">
    <property type="entry name" value="T4-TYPE LYSOZYME 1-RELATED"/>
    <property type="match status" value="1"/>
</dbReference>
<dbReference type="PANTHER" id="PTHR37406:SF1">
    <property type="entry name" value="T4-TYPE LYSOZYME 1-RELATED"/>
    <property type="match status" value="1"/>
</dbReference>
<dbReference type="Pfam" id="PF00959">
    <property type="entry name" value="Phage_lysozyme"/>
    <property type="match status" value="1"/>
</dbReference>
<dbReference type="PRINTS" id="PR00684">
    <property type="entry name" value="T4LYSOZYME"/>
</dbReference>
<dbReference type="SUPFAM" id="SSF53955">
    <property type="entry name" value="Lysozyme-like"/>
    <property type="match status" value="1"/>
</dbReference>
<comment type="catalytic activity">
    <reaction>
        <text>Hydrolysis of (1-&gt;4)-beta-linkages between N-acetylmuramic acid and N-acetyl-D-glucosamine residues in a peptidoglycan and between N-acetyl-D-glucosamine residues in chitodextrins.</text>
        <dbReference type="EC" id="3.2.1.17"/>
    </reaction>
</comment>
<comment type="similarity">
    <text evidence="2">Belongs to the glycosyl hydrolase 24 family.</text>
</comment>
<accession>Q556F2</accession>
<accession>Q86AA0</accession>
<feature type="chain" id="PRO_0000328719" description="Probable T4-type lysozyme 1">
    <location>
        <begin position="1"/>
        <end position="170"/>
    </location>
</feature>
<feature type="active site" description="Proton donor" evidence="1">
    <location>
        <position position="13"/>
    </location>
</feature>
<feature type="active site" description="Nucleophile" evidence="1">
    <location>
        <position position="22"/>
    </location>
</feature>
<keyword id="KW-0929">Antimicrobial</keyword>
<keyword id="KW-0081">Bacteriolytic enzyme</keyword>
<keyword id="KW-0326">Glycosidase</keyword>
<keyword id="KW-0378">Hydrolase</keyword>
<keyword id="KW-1185">Reference proteome</keyword>